<evidence type="ECO:0000255" key="1">
    <source>
        <dbReference type="HAMAP-Rule" id="MF_00692"/>
    </source>
</evidence>
<accession>Q3J3V1</accession>
<protein>
    <recommendedName>
        <fullName evidence="1">Protein nucleotidyltransferase YdiU</fullName>
        <ecNumber evidence="1">2.7.7.-</ecNumber>
    </recommendedName>
    <alternativeName>
        <fullName evidence="1">Protein adenylyltransferase YdiU</fullName>
        <ecNumber evidence="1">2.7.7.108</ecNumber>
    </alternativeName>
    <alternativeName>
        <fullName evidence="1">Protein uridylyltransferase YdiU</fullName>
        <ecNumber evidence="1">2.7.7.-</ecNumber>
    </alternativeName>
</protein>
<name>SELO_CERS4</name>
<keyword id="KW-0067">ATP-binding</keyword>
<keyword id="KW-0460">Magnesium</keyword>
<keyword id="KW-0464">Manganese</keyword>
<keyword id="KW-0479">Metal-binding</keyword>
<keyword id="KW-0547">Nucleotide-binding</keyword>
<keyword id="KW-0548">Nucleotidyltransferase</keyword>
<keyword id="KW-1185">Reference proteome</keyword>
<keyword id="KW-0808">Transferase</keyword>
<feature type="chain" id="PRO_0000271854" description="Protein nucleotidyltransferase YdiU">
    <location>
        <begin position="1"/>
        <end position="481"/>
    </location>
</feature>
<feature type="active site" description="Proton acceptor" evidence="1">
    <location>
        <position position="248"/>
    </location>
</feature>
<feature type="binding site" evidence="1">
    <location>
        <position position="85"/>
    </location>
    <ligand>
        <name>ATP</name>
        <dbReference type="ChEBI" id="CHEBI:30616"/>
    </ligand>
</feature>
<feature type="binding site" evidence="1">
    <location>
        <position position="87"/>
    </location>
    <ligand>
        <name>ATP</name>
        <dbReference type="ChEBI" id="CHEBI:30616"/>
    </ligand>
</feature>
<feature type="binding site" evidence="1">
    <location>
        <position position="88"/>
    </location>
    <ligand>
        <name>ATP</name>
        <dbReference type="ChEBI" id="CHEBI:30616"/>
    </ligand>
</feature>
<feature type="binding site" evidence="1">
    <location>
        <position position="108"/>
    </location>
    <ligand>
        <name>ATP</name>
        <dbReference type="ChEBI" id="CHEBI:30616"/>
    </ligand>
</feature>
<feature type="binding site" evidence="1">
    <location>
        <position position="120"/>
    </location>
    <ligand>
        <name>ATP</name>
        <dbReference type="ChEBI" id="CHEBI:30616"/>
    </ligand>
</feature>
<feature type="binding site" evidence="1">
    <location>
        <position position="121"/>
    </location>
    <ligand>
        <name>ATP</name>
        <dbReference type="ChEBI" id="CHEBI:30616"/>
    </ligand>
</feature>
<feature type="binding site" evidence="1">
    <location>
        <position position="172"/>
    </location>
    <ligand>
        <name>ATP</name>
        <dbReference type="ChEBI" id="CHEBI:30616"/>
    </ligand>
</feature>
<feature type="binding site" evidence="1">
    <location>
        <position position="179"/>
    </location>
    <ligand>
        <name>ATP</name>
        <dbReference type="ChEBI" id="CHEBI:30616"/>
    </ligand>
</feature>
<feature type="binding site" evidence="1">
    <location>
        <position position="249"/>
    </location>
    <ligand>
        <name>Mg(2+)</name>
        <dbReference type="ChEBI" id="CHEBI:18420"/>
    </ligand>
</feature>
<feature type="binding site" evidence="1">
    <location>
        <position position="258"/>
    </location>
    <ligand>
        <name>ATP</name>
        <dbReference type="ChEBI" id="CHEBI:30616"/>
    </ligand>
</feature>
<feature type="binding site" evidence="1">
    <location>
        <position position="258"/>
    </location>
    <ligand>
        <name>Mg(2+)</name>
        <dbReference type="ChEBI" id="CHEBI:18420"/>
    </ligand>
</feature>
<sequence>MTFRFDNSYARDLEGFYVDWPAAPVPAPRLLRLNRPLAEELGLDPDLLEREGAEIFSGRRLPEGAHPLAQAYAGHQFGGFSPQLGDGRALLIGEITDRAGRRRDLQLKGSGRTPFSRGADGKAALGPVLREYLVGEAMHGLGIPTTRALAAVATGEPLLRQEGERPGAILTRVAASHIRVGTFQFFAARSDIDRVRRLADYAIARHYPELASAPEPYLAFYEAVAEAQAQLVARWMLVGFIHGVMNTDNMTISGETIDYGPCAFMEGYDPGTVFSSIDLQGRYAYGNQPYILAWNLARLGEALLPLLDGDPVRAADKATSVLETVGARYQGHWLAGMRAKLGLAGAEEGDARLAEDLLEAMRSQRADWTLTFRRLAEAVTDEGALRPLFRDPAALAGWLPRWRARLAPDAAERMRATNPIYIARNHRVEEALAAAHAGDLAPFDRLLEALADPFTERADRELFALPAPEGFDDSYRTFCGT</sequence>
<reference key="1">
    <citation type="submission" date="2005-09" db="EMBL/GenBank/DDBJ databases">
        <title>Complete sequence of chromosome 1 of Rhodobacter sphaeroides 2.4.1.</title>
        <authorList>
            <person name="Copeland A."/>
            <person name="Lucas S."/>
            <person name="Lapidus A."/>
            <person name="Barry K."/>
            <person name="Detter J.C."/>
            <person name="Glavina T."/>
            <person name="Hammon N."/>
            <person name="Israni S."/>
            <person name="Pitluck S."/>
            <person name="Richardson P."/>
            <person name="Mackenzie C."/>
            <person name="Choudhary M."/>
            <person name="Larimer F."/>
            <person name="Hauser L.J."/>
            <person name="Land M."/>
            <person name="Donohue T.J."/>
            <person name="Kaplan S."/>
        </authorList>
    </citation>
    <scope>NUCLEOTIDE SEQUENCE [LARGE SCALE GENOMIC DNA]</scope>
    <source>
        <strain>ATCC 17023 / DSM 158 / JCM 6121 / CCUG 31486 / LMG 2827 / NBRC 12203 / NCIMB 8253 / ATH 2.4.1.</strain>
    </source>
</reference>
<organism>
    <name type="scientific">Cereibacter sphaeroides (strain ATCC 17023 / DSM 158 / JCM 6121 / CCUG 31486 / LMG 2827 / NBRC 12203 / NCIMB 8253 / ATH 2.4.1.)</name>
    <name type="common">Rhodobacter sphaeroides</name>
    <dbReference type="NCBI Taxonomy" id="272943"/>
    <lineage>
        <taxon>Bacteria</taxon>
        <taxon>Pseudomonadati</taxon>
        <taxon>Pseudomonadota</taxon>
        <taxon>Alphaproteobacteria</taxon>
        <taxon>Rhodobacterales</taxon>
        <taxon>Paracoccaceae</taxon>
        <taxon>Cereibacter</taxon>
    </lineage>
</organism>
<comment type="function">
    <text evidence="1">Nucleotidyltransferase involved in the post-translational modification of proteins. It can catalyze the addition of adenosine monophosphate (AMP) or uridine monophosphate (UMP) to a protein, resulting in modifications known as AMPylation and UMPylation.</text>
</comment>
<comment type="catalytic activity">
    <reaction evidence="1">
        <text>L-seryl-[protein] + ATP = 3-O-(5'-adenylyl)-L-seryl-[protein] + diphosphate</text>
        <dbReference type="Rhea" id="RHEA:58120"/>
        <dbReference type="Rhea" id="RHEA-COMP:9863"/>
        <dbReference type="Rhea" id="RHEA-COMP:15073"/>
        <dbReference type="ChEBI" id="CHEBI:29999"/>
        <dbReference type="ChEBI" id="CHEBI:30616"/>
        <dbReference type="ChEBI" id="CHEBI:33019"/>
        <dbReference type="ChEBI" id="CHEBI:142516"/>
        <dbReference type="EC" id="2.7.7.108"/>
    </reaction>
</comment>
<comment type="catalytic activity">
    <reaction evidence="1">
        <text>L-threonyl-[protein] + ATP = 3-O-(5'-adenylyl)-L-threonyl-[protein] + diphosphate</text>
        <dbReference type="Rhea" id="RHEA:54292"/>
        <dbReference type="Rhea" id="RHEA-COMP:11060"/>
        <dbReference type="Rhea" id="RHEA-COMP:13847"/>
        <dbReference type="ChEBI" id="CHEBI:30013"/>
        <dbReference type="ChEBI" id="CHEBI:30616"/>
        <dbReference type="ChEBI" id="CHEBI:33019"/>
        <dbReference type="ChEBI" id="CHEBI:138113"/>
        <dbReference type="EC" id="2.7.7.108"/>
    </reaction>
</comment>
<comment type="catalytic activity">
    <reaction evidence="1">
        <text>L-tyrosyl-[protein] + ATP = O-(5'-adenylyl)-L-tyrosyl-[protein] + diphosphate</text>
        <dbReference type="Rhea" id="RHEA:54288"/>
        <dbReference type="Rhea" id="RHEA-COMP:10136"/>
        <dbReference type="Rhea" id="RHEA-COMP:13846"/>
        <dbReference type="ChEBI" id="CHEBI:30616"/>
        <dbReference type="ChEBI" id="CHEBI:33019"/>
        <dbReference type="ChEBI" id="CHEBI:46858"/>
        <dbReference type="ChEBI" id="CHEBI:83624"/>
        <dbReference type="EC" id="2.7.7.108"/>
    </reaction>
</comment>
<comment type="catalytic activity">
    <reaction evidence="1">
        <text>L-histidyl-[protein] + UTP = N(tele)-(5'-uridylyl)-L-histidyl-[protein] + diphosphate</text>
        <dbReference type="Rhea" id="RHEA:83891"/>
        <dbReference type="Rhea" id="RHEA-COMP:9745"/>
        <dbReference type="Rhea" id="RHEA-COMP:20239"/>
        <dbReference type="ChEBI" id="CHEBI:29979"/>
        <dbReference type="ChEBI" id="CHEBI:33019"/>
        <dbReference type="ChEBI" id="CHEBI:46398"/>
        <dbReference type="ChEBI" id="CHEBI:233474"/>
    </reaction>
</comment>
<comment type="catalytic activity">
    <reaction evidence="1">
        <text>L-seryl-[protein] + UTP = O-(5'-uridylyl)-L-seryl-[protein] + diphosphate</text>
        <dbReference type="Rhea" id="RHEA:64604"/>
        <dbReference type="Rhea" id="RHEA-COMP:9863"/>
        <dbReference type="Rhea" id="RHEA-COMP:16635"/>
        <dbReference type="ChEBI" id="CHEBI:29999"/>
        <dbReference type="ChEBI" id="CHEBI:33019"/>
        <dbReference type="ChEBI" id="CHEBI:46398"/>
        <dbReference type="ChEBI" id="CHEBI:156051"/>
    </reaction>
</comment>
<comment type="catalytic activity">
    <reaction evidence="1">
        <text>L-tyrosyl-[protein] + UTP = O-(5'-uridylyl)-L-tyrosyl-[protein] + diphosphate</text>
        <dbReference type="Rhea" id="RHEA:83887"/>
        <dbReference type="Rhea" id="RHEA-COMP:10136"/>
        <dbReference type="Rhea" id="RHEA-COMP:20238"/>
        <dbReference type="ChEBI" id="CHEBI:33019"/>
        <dbReference type="ChEBI" id="CHEBI:46398"/>
        <dbReference type="ChEBI" id="CHEBI:46858"/>
        <dbReference type="ChEBI" id="CHEBI:90602"/>
    </reaction>
</comment>
<comment type="cofactor">
    <cofactor evidence="1">
        <name>Mg(2+)</name>
        <dbReference type="ChEBI" id="CHEBI:18420"/>
    </cofactor>
    <cofactor evidence="1">
        <name>Mn(2+)</name>
        <dbReference type="ChEBI" id="CHEBI:29035"/>
    </cofactor>
</comment>
<comment type="similarity">
    <text evidence="1">Belongs to the SELO family.</text>
</comment>
<proteinExistence type="inferred from homology"/>
<gene>
    <name evidence="1" type="primary">ydiU</name>
    <name evidence="1" type="synonym">selO</name>
    <name type="ordered locus">RHOS4_09650</name>
    <name type="ORF">RSP_2375</name>
</gene>
<dbReference type="EC" id="2.7.7.-" evidence="1"/>
<dbReference type="EC" id="2.7.7.108" evidence="1"/>
<dbReference type="EMBL" id="CP000143">
    <property type="protein sequence ID" value="ABA78533.1"/>
    <property type="molecule type" value="Genomic_DNA"/>
</dbReference>
<dbReference type="RefSeq" id="WP_011337441.1">
    <property type="nucleotide sequence ID" value="NC_007493.2"/>
</dbReference>
<dbReference type="RefSeq" id="YP_352434.1">
    <property type="nucleotide sequence ID" value="NC_007493.2"/>
</dbReference>
<dbReference type="SMR" id="Q3J3V1"/>
<dbReference type="STRING" id="272943.RSP_2375"/>
<dbReference type="EnsemblBacteria" id="ABA78533">
    <property type="protein sequence ID" value="ABA78533"/>
    <property type="gene ID" value="RSP_2375"/>
</dbReference>
<dbReference type="GeneID" id="3719911"/>
<dbReference type="KEGG" id="rsp:RSP_2375"/>
<dbReference type="PATRIC" id="fig|272943.9.peg.1291"/>
<dbReference type="eggNOG" id="COG0397">
    <property type="taxonomic scope" value="Bacteria"/>
</dbReference>
<dbReference type="OrthoDB" id="9776281at2"/>
<dbReference type="PhylomeDB" id="Q3J3V1"/>
<dbReference type="Proteomes" id="UP000002703">
    <property type="component" value="Chromosome 1"/>
</dbReference>
<dbReference type="GO" id="GO:0070733">
    <property type="term" value="F:AMPylase activity"/>
    <property type="evidence" value="ECO:0007669"/>
    <property type="project" value="RHEA"/>
</dbReference>
<dbReference type="GO" id="GO:0005524">
    <property type="term" value="F:ATP binding"/>
    <property type="evidence" value="ECO:0007669"/>
    <property type="project" value="UniProtKB-UniRule"/>
</dbReference>
<dbReference type="GO" id="GO:0000287">
    <property type="term" value="F:magnesium ion binding"/>
    <property type="evidence" value="ECO:0007669"/>
    <property type="project" value="UniProtKB-UniRule"/>
</dbReference>
<dbReference type="HAMAP" id="MF_00692">
    <property type="entry name" value="YdiU_SelO"/>
    <property type="match status" value="1"/>
</dbReference>
<dbReference type="InterPro" id="IPR003846">
    <property type="entry name" value="SelO"/>
</dbReference>
<dbReference type="NCBIfam" id="NF000658">
    <property type="entry name" value="PRK00029.1"/>
    <property type="match status" value="1"/>
</dbReference>
<dbReference type="PANTHER" id="PTHR32057">
    <property type="entry name" value="PROTEIN ADENYLYLTRANSFERASE SELO, MITOCHONDRIAL"/>
    <property type="match status" value="1"/>
</dbReference>
<dbReference type="PANTHER" id="PTHR32057:SF14">
    <property type="entry name" value="PROTEIN ADENYLYLTRANSFERASE SELO, MITOCHONDRIAL"/>
    <property type="match status" value="1"/>
</dbReference>
<dbReference type="Pfam" id="PF02696">
    <property type="entry name" value="SelO"/>
    <property type="match status" value="1"/>
</dbReference>